<reference key="1">
    <citation type="submission" date="2006-03" db="EMBL/GenBank/DDBJ databases">
        <title>Complete sequence of chromosome of Nitrobacter hamburgensis X14.</title>
        <authorList>
            <consortium name="US DOE Joint Genome Institute"/>
            <person name="Copeland A."/>
            <person name="Lucas S."/>
            <person name="Lapidus A."/>
            <person name="Barry K."/>
            <person name="Detter J.C."/>
            <person name="Glavina del Rio T."/>
            <person name="Hammon N."/>
            <person name="Israni S."/>
            <person name="Dalin E."/>
            <person name="Tice H."/>
            <person name="Pitluck S."/>
            <person name="Chain P."/>
            <person name="Malfatti S."/>
            <person name="Shin M."/>
            <person name="Vergez L."/>
            <person name="Schmutz J."/>
            <person name="Larimer F."/>
            <person name="Land M."/>
            <person name="Hauser L."/>
            <person name="Kyrpides N."/>
            <person name="Ivanova N."/>
            <person name="Ward B."/>
            <person name="Arp D."/>
            <person name="Klotz M."/>
            <person name="Stein L."/>
            <person name="O'Mullan G."/>
            <person name="Starkenburg S."/>
            <person name="Sayavedra L."/>
            <person name="Poret-Peterson A.T."/>
            <person name="Gentry M.E."/>
            <person name="Bruce D."/>
            <person name="Richardson P."/>
        </authorList>
    </citation>
    <scope>NUCLEOTIDE SEQUENCE [LARGE SCALE GENOMIC DNA]</scope>
    <source>
        <strain>DSM 10229 / NCIMB 13809 / X14</strain>
    </source>
</reference>
<organism>
    <name type="scientific">Nitrobacter hamburgensis (strain DSM 10229 / NCIMB 13809 / X14)</name>
    <dbReference type="NCBI Taxonomy" id="323097"/>
    <lineage>
        <taxon>Bacteria</taxon>
        <taxon>Pseudomonadati</taxon>
        <taxon>Pseudomonadota</taxon>
        <taxon>Alphaproteobacteria</taxon>
        <taxon>Hyphomicrobiales</taxon>
        <taxon>Nitrobacteraceae</taxon>
        <taxon>Nitrobacter</taxon>
    </lineage>
</organism>
<keyword id="KW-0274">FAD</keyword>
<keyword id="KW-0285">Flavoprotein</keyword>
<keyword id="KW-0521">NADP</keyword>
<keyword id="KW-0560">Oxidoreductase</keyword>
<keyword id="KW-1185">Reference proteome</keyword>
<accession>Q1QNQ1</accession>
<sequence>MSEAIKTDVLIIGAGPCGLFAVFELGLLDMKVHLVDILDKIGGQCAELYPEKPIYDIPGIPFVTGQGLTEALLEQIKPFNPNFHLNEMVESIEKIGDPGFRVTTDAGKVFECKIVVVSAGGGSFQPKRPPVPGIEAYENTSVFYAVRKMEQFRDREILIVGGGDSALDWTLNLHPLAKRITLLHRRDDFRAAPHSVEQMRKLVADGKMDLKIGQVTALEGADGQLSGAQVKGSDNAMSTVSCDTMLPFFGLTMKLGPVANWGLQLENNLVPVETASFETNVPGIFAIGDINTYPGKLKLILSGFHEGALMAQKAHRYVYPDKRLVFQYTTSSSSLQKKLGVN</sequence>
<gene>
    <name type="ordered locus">Nham_1321</name>
</gene>
<comment type="catalytic activity">
    <reaction evidence="1">
        <text>2 reduced [2Fe-2S]-[ferredoxin] + NADP(+) + H(+) = 2 oxidized [2Fe-2S]-[ferredoxin] + NADPH</text>
        <dbReference type="Rhea" id="RHEA:20125"/>
        <dbReference type="Rhea" id="RHEA-COMP:10000"/>
        <dbReference type="Rhea" id="RHEA-COMP:10001"/>
        <dbReference type="ChEBI" id="CHEBI:15378"/>
        <dbReference type="ChEBI" id="CHEBI:33737"/>
        <dbReference type="ChEBI" id="CHEBI:33738"/>
        <dbReference type="ChEBI" id="CHEBI:57783"/>
        <dbReference type="ChEBI" id="CHEBI:58349"/>
        <dbReference type="EC" id="1.18.1.2"/>
    </reaction>
</comment>
<comment type="cofactor">
    <cofactor evidence="1">
        <name>FAD</name>
        <dbReference type="ChEBI" id="CHEBI:57692"/>
    </cofactor>
    <text evidence="1">Binds 1 FAD per subunit.</text>
</comment>
<comment type="subunit">
    <text evidence="1">Homodimer.</text>
</comment>
<comment type="similarity">
    <text evidence="1">Belongs to the ferredoxin--NADP reductase type 2 family.</text>
</comment>
<evidence type="ECO:0000255" key="1">
    <source>
        <dbReference type="HAMAP-Rule" id="MF_01685"/>
    </source>
</evidence>
<dbReference type="EC" id="1.18.1.2" evidence="1"/>
<dbReference type="EMBL" id="CP000319">
    <property type="protein sequence ID" value="ABE62146.1"/>
    <property type="molecule type" value="Genomic_DNA"/>
</dbReference>
<dbReference type="RefSeq" id="WP_011509838.1">
    <property type="nucleotide sequence ID" value="NC_007964.1"/>
</dbReference>
<dbReference type="SMR" id="Q1QNQ1"/>
<dbReference type="STRING" id="323097.Nham_1321"/>
<dbReference type="KEGG" id="nha:Nham_1321"/>
<dbReference type="eggNOG" id="COG0492">
    <property type="taxonomic scope" value="Bacteria"/>
</dbReference>
<dbReference type="HOGENOM" id="CLU_031864_5_5_5"/>
<dbReference type="OrthoDB" id="9806179at2"/>
<dbReference type="Proteomes" id="UP000001953">
    <property type="component" value="Chromosome"/>
</dbReference>
<dbReference type="GO" id="GO:0004324">
    <property type="term" value="F:ferredoxin-NADP+ reductase activity"/>
    <property type="evidence" value="ECO:0007669"/>
    <property type="project" value="UniProtKB-UniRule"/>
</dbReference>
<dbReference type="GO" id="GO:0050660">
    <property type="term" value="F:flavin adenine dinucleotide binding"/>
    <property type="evidence" value="ECO:0007669"/>
    <property type="project" value="UniProtKB-UniRule"/>
</dbReference>
<dbReference type="GO" id="GO:0050661">
    <property type="term" value="F:NADP binding"/>
    <property type="evidence" value="ECO:0007669"/>
    <property type="project" value="UniProtKB-UniRule"/>
</dbReference>
<dbReference type="Gene3D" id="3.50.50.60">
    <property type="entry name" value="FAD/NAD(P)-binding domain"/>
    <property type="match status" value="2"/>
</dbReference>
<dbReference type="HAMAP" id="MF_01685">
    <property type="entry name" value="FENR2"/>
    <property type="match status" value="1"/>
</dbReference>
<dbReference type="InterPro" id="IPR036188">
    <property type="entry name" value="FAD/NAD-bd_sf"/>
</dbReference>
<dbReference type="InterPro" id="IPR023753">
    <property type="entry name" value="FAD/NAD-binding_dom"/>
</dbReference>
<dbReference type="InterPro" id="IPR022890">
    <property type="entry name" value="Fd--NADP_Rdtase_type_2"/>
</dbReference>
<dbReference type="InterPro" id="IPR050097">
    <property type="entry name" value="Ferredoxin-NADP_redctase_2"/>
</dbReference>
<dbReference type="PANTHER" id="PTHR48105">
    <property type="entry name" value="THIOREDOXIN REDUCTASE 1-RELATED-RELATED"/>
    <property type="match status" value="1"/>
</dbReference>
<dbReference type="Pfam" id="PF07992">
    <property type="entry name" value="Pyr_redox_2"/>
    <property type="match status" value="1"/>
</dbReference>
<dbReference type="PRINTS" id="PR00368">
    <property type="entry name" value="FADPNR"/>
</dbReference>
<dbReference type="PRINTS" id="PR00469">
    <property type="entry name" value="PNDRDTASEII"/>
</dbReference>
<dbReference type="SUPFAM" id="SSF51905">
    <property type="entry name" value="FAD/NAD(P)-binding domain"/>
    <property type="match status" value="1"/>
</dbReference>
<feature type="chain" id="PRO_0000364885" description="Ferredoxin--NADP reductase">
    <location>
        <begin position="1"/>
        <end position="342"/>
    </location>
</feature>
<feature type="binding site" evidence="1">
    <location>
        <position position="17"/>
    </location>
    <ligand>
        <name>FAD</name>
        <dbReference type="ChEBI" id="CHEBI:57692"/>
    </ligand>
</feature>
<feature type="binding site" evidence="1">
    <location>
        <position position="36"/>
    </location>
    <ligand>
        <name>FAD</name>
        <dbReference type="ChEBI" id="CHEBI:57692"/>
    </ligand>
</feature>
<feature type="binding site" evidence="1">
    <location>
        <position position="44"/>
    </location>
    <ligand>
        <name>FAD</name>
        <dbReference type="ChEBI" id="CHEBI:57692"/>
    </ligand>
</feature>
<feature type="binding site" evidence="1">
    <location>
        <position position="49"/>
    </location>
    <ligand>
        <name>FAD</name>
        <dbReference type="ChEBI" id="CHEBI:57692"/>
    </ligand>
</feature>
<feature type="binding site" evidence="1">
    <location>
        <position position="89"/>
    </location>
    <ligand>
        <name>FAD</name>
        <dbReference type="ChEBI" id="CHEBI:57692"/>
    </ligand>
</feature>
<feature type="binding site" evidence="1">
    <location>
        <position position="124"/>
    </location>
    <ligand>
        <name>FAD</name>
        <dbReference type="ChEBI" id="CHEBI:57692"/>
    </ligand>
</feature>
<feature type="binding site" evidence="1">
    <location>
        <position position="289"/>
    </location>
    <ligand>
        <name>FAD</name>
        <dbReference type="ChEBI" id="CHEBI:57692"/>
    </ligand>
</feature>
<feature type="binding site" evidence="1">
    <location>
        <position position="330"/>
    </location>
    <ligand>
        <name>FAD</name>
        <dbReference type="ChEBI" id="CHEBI:57692"/>
    </ligand>
</feature>
<protein>
    <recommendedName>
        <fullName evidence="1">Ferredoxin--NADP reductase</fullName>
        <shortName evidence="1">FNR</shortName>
        <shortName evidence="1">Fd-NADP(+) reductase</shortName>
        <ecNumber evidence="1">1.18.1.2</ecNumber>
    </recommendedName>
</protein>
<name>FENR_NITHX</name>
<proteinExistence type="inferred from homology"/>